<name>MCTS_RHIJ3</name>
<organism>
    <name type="scientific">Rhizobium johnstonii (strain DSM 114642 / LMG 32736 / 3841)</name>
    <name type="common">Rhizobium leguminosarum bv. viciae</name>
    <dbReference type="NCBI Taxonomy" id="216596"/>
    <lineage>
        <taxon>Bacteria</taxon>
        <taxon>Pseudomonadati</taxon>
        <taxon>Pseudomonadota</taxon>
        <taxon>Alphaproteobacteria</taxon>
        <taxon>Hyphomicrobiales</taxon>
        <taxon>Rhizobiaceae</taxon>
        <taxon>Rhizobium/Agrobacterium group</taxon>
        <taxon>Rhizobium</taxon>
        <taxon>Rhizobium johnstonii</taxon>
    </lineage>
</organism>
<geneLocation type="plasmid" evidence="6">
    <name>pRL10</name>
</geneLocation>
<keyword id="KW-0067">ATP-binding</keyword>
<keyword id="KW-1003">Cell membrane</keyword>
<keyword id="KW-0418">Kinase</keyword>
<keyword id="KW-0472">Membrane</keyword>
<keyword id="KW-0547">Nucleotide-binding</keyword>
<keyword id="KW-0597">Phosphoprotein</keyword>
<keyword id="KW-0614">Plasmid</keyword>
<keyword id="KW-0808">Transferase</keyword>
<keyword id="KW-0812">Transmembrane</keyword>
<keyword id="KW-1133">Transmembrane helix</keyword>
<keyword id="KW-0902">Two-component regulatory system</keyword>
<evidence type="ECO:0000250" key="1"/>
<evidence type="ECO:0000255" key="2"/>
<evidence type="ECO:0000269" key="3">
    <source>
    </source>
</evidence>
<evidence type="ECO:0000303" key="4">
    <source>
    </source>
</evidence>
<evidence type="ECO:0000305" key="5"/>
<evidence type="ECO:0000312" key="6">
    <source>
        <dbReference type="EMBL" id="CAK10633.1"/>
    </source>
</evidence>
<dbReference type="EC" id="2.7.13.3" evidence="1"/>
<dbReference type="EMBL" id="AJ421944">
    <property type="protein sequence ID" value="CAD19126.1"/>
    <property type="status" value="ALT_INIT"/>
    <property type="molecule type" value="Genomic_DNA"/>
</dbReference>
<dbReference type="EMBL" id="AM236084">
    <property type="protein sequence ID" value="CAK10633.1"/>
    <property type="molecule type" value="Genomic_DNA"/>
</dbReference>
<dbReference type="RefSeq" id="WP_011654431.1">
    <property type="nucleotide sequence ID" value="NC_008381.1"/>
</dbReference>
<dbReference type="SMR" id="Q1M799"/>
<dbReference type="EnsemblBacteria" id="CAK10633">
    <property type="protein sequence ID" value="CAK10633"/>
    <property type="gene ID" value="pRL100407"/>
</dbReference>
<dbReference type="KEGG" id="rle:pRL100407"/>
<dbReference type="HOGENOM" id="CLU_000445_20_6_5"/>
<dbReference type="Proteomes" id="UP000006575">
    <property type="component" value="Plasmid pRL10"/>
</dbReference>
<dbReference type="GO" id="GO:0005886">
    <property type="term" value="C:plasma membrane"/>
    <property type="evidence" value="ECO:0007669"/>
    <property type="project" value="UniProtKB-SubCell"/>
</dbReference>
<dbReference type="GO" id="GO:0005524">
    <property type="term" value="F:ATP binding"/>
    <property type="evidence" value="ECO:0007669"/>
    <property type="project" value="UniProtKB-KW"/>
</dbReference>
<dbReference type="GO" id="GO:0000155">
    <property type="term" value="F:phosphorelay sensor kinase activity"/>
    <property type="evidence" value="ECO:0007669"/>
    <property type="project" value="InterPro"/>
</dbReference>
<dbReference type="GO" id="GO:0046983">
    <property type="term" value="F:protein dimerization activity"/>
    <property type="evidence" value="ECO:0007669"/>
    <property type="project" value="InterPro"/>
</dbReference>
<dbReference type="CDD" id="cd16917">
    <property type="entry name" value="HATPase_UhpB-NarQ-NarX-like"/>
    <property type="match status" value="1"/>
</dbReference>
<dbReference type="Gene3D" id="1.20.5.1930">
    <property type="match status" value="1"/>
</dbReference>
<dbReference type="Gene3D" id="3.30.565.10">
    <property type="entry name" value="Histidine kinase-like ATPase, C-terminal domain"/>
    <property type="match status" value="1"/>
</dbReference>
<dbReference type="Gene3D" id="3.30.450.20">
    <property type="entry name" value="PAS domain"/>
    <property type="match status" value="1"/>
</dbReference>
<dbReference type="InterPro" id="IPR036890">
    <property type="entry name" value="HATPase_C_sf"/>
</dbReference>
<dbReference type="InterPro" id="IPR033480">
    <property type="entry name" value="sCache_2"/>
</dbReference>
<dbReference type="InterPro" id="IPR050482">
    <property type="entry name" value="Sensor_HK_TwoCompSys"/>
</dbReference>
<dbReference type="InterPro" id="IPR011712">
    <property type="entry name" value="Sig_transdc_His_kin_sub3_dim/P"/>
</dbReference>
<dbReference type="InterPro" id="IPR017171">
    <property type="entry name" value="Sig_transdc_His_kinase_MctS"/>
</dbReference>
<dbReference type="PANTHER" id="PTHR24421">
    <property type="entry name" value="NITRATE/NITRITE SENSOR PROTEIN NARX-RELATED"/>
    <property type="match status" value="1"/>
</dbReference>
<dbReference type="Pfam" id="PF02518">
    <property type="entry name" value="HATPase_c"/>
    <property type="match status" value="1"/>
</dbReference>
<dbReference type="Pfam" id="PF07730">
    <property type="entry name" value="HisKA_3"/>
    <property type="match status" value="1"/>
</dbReference>
<dbReference type="Pfam" id="PF17200">
    <property type="entry name" value="sCache_2"/>
    <property type="match status" value="1"/>
</dbReference>
<dbReference type="PIRSF" id="PIRSF037314">
    <property type="entry name" value="STHK_MctS"/>
    <property type="match status" value="1"/>
</dbReference>
<dbReference type="SMART" id="SM01049">
    <property type="entry name" value="Cache_2"/>
    <property type="match status" value="1"/>
</dbReference>
<dbReference type="SMART" id="SM00387">
    <property type="entry name" value="HATPase_c"/>
    <property type="match status" value="1"/>
</dbReference>
<dbReference type="SUPFAM" id="SSF55874">
    <property type="entry name" value="ATPase domain of HSP90 chaperone/DNA topoisomerase II/histidine kinase"/>
    <property type="match status" value="1"/>
</dbReference>
<protein>
    <recommendedName>
        <fullName evidence="5">Sensor histidine kinase MctS</fullName>
        <ecNumber evidence="1">2.7.13.3</ecNumber>
    </recommendedName>
</protein>
<reference key="1">
    <citation type="journal article" date="2002" name="J. Bacteriol.">
        <title>A monocarboxylate permease of Rhizobium leguminosarum is the first member of a new subfamily of transporters.</title>
        <authorList>
            <person name="Hosie A.H."/>
            <person name="Allaway D."/>
            <person name="Poole P.S."/>
        </authorList>
    </citation>
    <scope>NUCLEOTIDE SEQUENCE [GENOMIC DNA]</scope>
    <scope>FUNCTION</scope>
    <source>
        <strain>DSM 114642 / LMG 32736 / 3841</strain>
    </source>
</reference>
<reference key="2">
    <citation type="journal article" date="2006" name="Genome Biol.">
        <title>The genome of Rhizobium leguminosarum has recognizable core and accessory components.</title>
        <authorList>
            <person name="Young J.P.W."/>
            <person name="Crossman L.C."/>
            <person name="Johnston A.W.B."/>
            <person name="Thomson N.R."/>
            <person name="Ghazoui Z.F."/>
            <person name="Hull K.H."/>
            <person name="Wexler M."/>
            <person name="Curson A.R.J."/>
            <person name="Todd J.D."/>
            <person name="Poole P.S."/>
            <person name="Mauchline T.H."/>
            <person name="East A.K."/>
            <person name="Quail M.A."/>
            <person name="Churcher C."/>
            <person name="Arrowsmith C."/>
            <person name="Cherevach I."/>
            <person name="Chillingworth T."/>
            <person name="Clarke K."/>
            <person name="Cronin A."/>
            <person name="Davis P."/>
            <person name="Fraser A."/>
            <person name="Hance Z."/>
            <person name="Hauser H."/>
            <person name="Jagels K."/>
            <person name="Moule S."/>
            <person name="Mungall K."/>
            <person name="Norbertczak H."/>
            <person name="Rabbinowitsch E."/>
            <person name="Sanders M."/>
            <person name="Simmonds M."/>
            <person name="Whitehead S."/>
            <person name="Parkhill J."/>
        </authorList>
    </citation>
    <scope>NUCLEOTIDE SEQUENCE [LARGE SCALE GENOMIC DNA]</scope>
    <source>
        <strain>DSM 114642 / LMG 32736 / 3841</strain>
    </source>
</reference>
<sequence length="461" mass="50713">MTLRHQIIALAIVPLVISILAITTFITWQSANLAKNSIDTFEQNMLKTKEAEILNLTNLALSAIQTIYDKAGSDDEAAKQQVAAILTSLDYGKDGYFFVYDYDGNNIVHPRQSFRHGHNWLDLTDPDGDKVIAELIATAKAGGGLHQYKWQKPSTGQIADKLSFVVSLDKWHWVVGTGVYLDDVFAQSAAANAGMRANIKRTFVIVALIDVPSVLVVFTTCMLLTFHERRMADSRLKALTQRVIDTQEEERARLARELHDGISQNLVGVRYAMDLAGRKVRTNVDDAALTIDRGVEALNGAIKEIRRLSHDLRPRVLDDLGLTAALEALCYHFAERTGIETKIDASGFTDTLKAEANTALYRVAQEAFNNVERHAGASKLAVKLWSDNGRARMTVSDNGAGFDGIKDGMSGRSGLGLRNMQERMAHFRGLLLINSSEAGTTLTAMMPKSANRPVNRQAEAA</sequence>
<gene>
    <name evidence="4" type="primary">mctS</name>
    <name evidence="6" type="ordered locus">pRL100407</name>
</gene>
<comment type="function">
    <text evidence="3">Member of the two-component regulatory system MctS/MctR, which activates mctP expression.</text>
</comment>
<comment type="catalytic activity">
    <reaction evidence="1">
        <text>ATP + protein L-histidine = ADP + protein N-phospho-L-histidine.</text>
        <dbReference type="EC" id="2.7.13.3"/>
    </reaction>
</comment>
<comment type="subcellular location">
    <subcellularLocation>
        <location evidence="5">Cell membrane</location>
        <topology evidence="2">Multi-pass membrane protein</topology>
    </subcellularLocation>
</comment>
<comment type="sequence caution" evidence="5">
    <conflict type="erroneous initiation">
        <sequence resource="EMBL-CDS" id="CAD19126"/>
    </conflict>
    <text>Truncated N-terminus.</text>
</comment>
<proteinExistence type="inferred from homology"/>
<accession>Q1M799</accession>
<accession>Q8VM89</accession>
<feature type="chain" id="PRO_0000430568" description="Sensor histidine kinase MctS">
    <location>
        <begin position="1"/>
        <end position="461"/>
    </location>
</feature>
<feature type="transmembrane region" description="Helical" evidence="2">
    <location>
        <begin position="7"/>
        <end position="27"/>
    </location>
</feature>
<feature type="transmembrane region" description="Helical" evidence="2">
    <location>
        <begin position="203"/>
        <end position="223"/>
    </location>
</feature>
<feature type="domain" description="Histidine kinase" evidence="5">
    <location>
        <begin position="360"/>
        <end position="450"/>
    </location>
</feature>
<feature type="modified residue" description="Phosphohistidine; by autocatalysis" evidence="1">
    <location>
        <position position="259"/>
    </location>
</feature>